<dbReference type="EMBL" id="AL590449">
    <property type="protein sequence ID" value="CAD25826.1"/>
    <property type="molecule type" value="Genomic_DNA"/>
</dbReference>
<dbReference type="RefSeq" id="NP_586222.1">
    <property type="nucleotide sequence ID" value="NM_001042055.1"/>
</dbReference>
<dbReference type="SMR" id="Q8SUD4"/>
<dbReference type="STRING" id="284813.Q8SUD4"/>
<dbReference type="GeneID" id="859871"/>
<dbReference type="KEGG" id="ecu:ECU10_1070"/>
<dbReference type="VEuPathDB" id="MicrosporidiaDB:ECU10_1070"/>
<dbReference type="HOGENOM" id="CLU_175004_0_0_1"/>
<dbReference type="InParanoid" id="Q8SUD4"/>
<dbReference type="OMA" id="QESTMND"/>
<dbReference type="OrthoDB" id="2193863at2759"/>
<dbReference type="Proteomes" id="UP000000819">
    <property type="component" value="Chromosome X"/>
</dbReference>
<sequence length="101" mass="11161">MTQESTMNDIYPLAALLIYATNQKVTKEKISSVFKFLGLESHPKICEFFEVDAVEIKKLLMSSTQEAAAPAGPQEPAEASGDAGKKEEVEEEEIEIDFGMF</sequence>
<organism>
    <name type="scientific">Encephalitozoon cuniculi (strain GB-M1)</name>
    <name type="common">Microsporidian parasite</name>
    <dbReference type="NCBI Taxonomy" id="284813"/>
    <lineage>
        <taxon>Eukaryota</taxon>
        <taxon>Fungi</taxon>
        <taxon>Fungi incertae sedis</taxon>
        <taxon>Microsporidia</taxon>
        <taxon>Unikaryonidae</taxon>
        <taxon>Encephalitozoon</taxon>
    </lineage>
</organism>
<keyword id="KW-1185">Reference proteome</keyword>
<proteinExistence type="evidence at protein level"/>
<protein>
    <recommendedName>
        <fullName>Uncharacterized protein ECU10_1070</fullName>
    </recommendedName>
</protein>
<gene>
    <name type="ordered locus">ECU10_1070</name>
</gene>
<comment type="developmental stage">
    <text evidence="2">Expressed in late sporogonial stages.</text>
</comment>
<reference key="1">
    <citation type="journal article" date="2001" name="Nature">
        <title>Genome sequence and gene compaction of the eukaryote parasite Encephalitozoon cuniculi.</title>
        <authorList>
            <person name="Katinka M.D."/>
            <person name="Duprat S."/>
            <person name="Cornillot E."/>
            <person name="Metenier G."/>
            <person name="Thomarat F."/>
            <person name="Prensier G."/>
            <person name="Barbe V."/>
            <person name="Peyretaillade E."/>
            <person name="Brottier P."/>
            <person name="Wincker P."/>
            <person name="Delbac F."/>
            <person name="El Alaoui H."/>
            <person name="Peyret P."/>
            <person name="Saurin W."/>
            <person name="Gouy M."/>
            <person name="Weissenbach J."/>
            <person name="Vivares C.P."/>
        </authorList>
    </citation>
    <scope>NUCLEOTIDE SEQUENCE [LARGE SCALE GENOMIC DNA]</scope>
    <source>
        <strain>GB-M1</strain>
    </source>
</reference>
<reference key="2">
    <citation type="journal article" date="2006" name="Proteomics">
        <title>Proteomic analysis of the eukaryotic parasite Encephalitozoon cuniculi (microsporidia): a reference map for proteins expressed in late sporogonial stages.</title>
        <authorList>
            <person name="Brosson D."/>
            <person name="Kuhn L."/>
            <person name="Delbac F."/>
            <person name="Garin J."/>
            <person name="Vivares C.P."/>
            <person name="Texier C."/>
        </authorList>
    </citation>
    <scope>IDENTIFICATION BY MASS SPECTROMETRY [LARGE SCALE ANALYSIS]</scope>
    <scope>DEVELOPMENTAL STAGE</scope>
</reference>
<evidence type="ECO:0000256" key="1">
    <source>
        <dbReference type="SAM" id="MobiDB-lite"/>
    </source>
</evidence>
<evidence type="ECO:0000269" key="2">
    <source>
    </source>
</evidence>
<feature type="chain" id="PRO_0000382784" description="Uncharacterized protein ECU10_1070">
    <location>
        <begin position="1"/>
        <end position="101"/>
    </location>
</feature>
<feature type="region of interest" description="Disordered" evidence="1">
    <location>
        <begin position="65"/>
        <end position="101"/>
    </location>
</feature>
<feature type="compositionally biased region" description="Low complexity" evidence="1">
    <location>
        <begin position="65"/>
        <end position="79"/>
    </location>
</feature>
<feature type="compositionally biased region" description="Acidic residues" evidence="1">
    <location>
        <begin position="89"/>
        <end position="101"/>
    </location>
</feature>
<name>YAA7_ENCCU</name>
<accession>Q8SUD4</accession>